<gene>
    <name evidence="6" type="primary">ctg-1</name>
    <name evidence="6" type="ORF">H06O01.3</name>
</gene>
<organism evidence="5">
    <name type="scientific">Caenorhabditis elegans</name>
    <dbReference type="NCBI Taxonomy" id="6239"/>
    <lineage>
        <taxon>Eukaryota</taxon>
        <taxon>Metazoa</taxon>
        <taxon>Ecdysozoa</taxon>
        <taxon>Nematoda</taxon>
        <taxon>Chromadorea</taxon>
        <taxon>Rhabditida</taxon>
        <taxon>Rhabditina</taxon>
        <taxon>Rhabditomorpha</taxon>
        <taxon>Rhabditoidea</taxon>
        <taxon>Rhabditidae</taxon>
        <taxon>Peloderinae</taxon>
        <taxon>Caenorhabditis</taxon>
    </lineage>
</organism>
<proteinExistence type="evidence at transcript level"/>
<feature type="chain" id="PRO_0000448938" description="Protein ctg-1">
    <location>
        <begin position="1"/>
        <end position="383"/>
    </location>
</feature>
<feature type="domain" description="CRAL-TRIO" evidence="1">
    <location>
        <begin position="73"/>
        <end position="247"/>
    </location>
</feature>
<feature type="domain" description="GOLD" evidence="2">
    <location>
        <begin position="271"/>
        <end position="380"/>
    </location>
</feature>
<feature type="splice variant" id="VSP_060470" description="In isoform c." evidence="4">
    <location>
        <begin position="1"/>
        <end position="144"/>
    </location>
</feature>
<feature type="splice variant" id="VSP_060471" description="In isoform b." evidence="4">
    <location>
        <begin position="1"/>
        <end position="95"/>
    </location>
</feature>
<comment type="function">
    <text evidence="3 4">Vesicle trafficking protein (Probable). Functions in uterine cells to promote basement membrane (BM) mobility and BM gap formation during tissue remodeling (PubMed:27661254).</text>
</comment>
<comment type="subcellular location">
    <subcellularLocation>
        <location evidence="3">Cytoplasm</location>
        <location evidence="3">Cytosol</location>
    </subcellularLocation>
</comment>
<comment type="alternative products">
    <event type="alternative splicing"/>
    <isoform>
        <id>O17907-1</id>
        <name evidence="6">a</name>
        <sequence type="displayed"/>
    </isoform>
    <isoform>
        <id>O17907-2</id>
        <name evidence="7">b</name>
        <sequence type="described" ref="VSP_060471"/>
    </isoform>
    <isoform>
        <id>O17907-3</id>
        <name evidence="8">c</name>
        <sequence type="described" ref="VSP_060470"/>
    </isoform>
</comment>
<comment type="tissue specificity">
    <text evidence="3">Highly expressed in cells of the pi uterine cell lineage.</text>
</comment>
<comment type="developmental stage">
    <text evidence="3">Expressed in cells of the pi uterine cell lineage during the 8-cell stage of development.</text>
</comment>
<comment type="disruption phenotype">
    <text evidence="3">RNAi-mediated knockdown in cells of the pi uterine cell lineage impairs basement membrane (BM) sliding along each other and reduces the size of BM openings.</text>
</comment>
<accession>O17907</accession>
<accession>K8ES75</accession>
<accession>K8F7T8</accession>
<name>CTG1_CAEEL</name>
<reference evidence="5" key="1">
    <citation type="journal article" date="1998" name="Science">
        <title>Genome sequence of the nematode C. elegans: a platform for investigating biology.</title>
        <authorList>
            <consortium name="The C. elegans sequencing consortium"/>
        </authorList>
    </citation>
    <scope>NUCLEOTIDE SEQUENCE [LARGE SCALE GENOMIC DNA]</scope>
    <source>
        <strain evidence="5">Bristol N2</strain>
    </source>
</reference>
<reference evidence="4" key="2">
    <citation type="journal article" date="2016" name="Elife">
        <title>Boundary cells restrict dystroglycan trafficking to control basement membrane sliding during tissue remodeling.</title>
        <authorList>
            <person name="McClatchey S.T."/>
            <person name="Wang Z."/>
            <person name="Linden L.M."/>
            <person name="Hastie E.L."/>
            <person name="Wang L."/>
            <person name="Shen W."/>
            <person name="Chen A."/>
            <person name="Chi Q."/>
            <person name="Sherwood D.R."/>
        </authorList>
    </citation>
    <scope>FUNCTION</scope>
    <scope>SUBCELLULAR LOCATION</scope>
    <scope>TISSUE SPECIFICITY</scope>
    <scope>DEVELOPMENTAL STAGE</scope>
    <scope>DISRUPTION PHENOTYPE</scope>
</reference>
<sequence length="383" mass="43847">MLVSPTAAATSIEQQTIRDLRSIVPQIDNLNDGYVLRWLRAKEGRFDETAESLKKHVTFRNAWHLDKIEQWTPPECLEKYCGYGLLGDTEGRPILMSLLGNVDVEGLLRSVASLDYIKFSLAAIEKGMKLCEEKAKESGRPFEQMTLVFDLENITSAHFSCKQFASSFTTLVSLFQDHYPLFLRKILIIRAPEMARIAYASITAILQDPITRLVEMPSESDWKWSLAQIVNLDAWPMYWGGNLVENGDPKCPSRIKYGGGAVDESYFVDPKKAMADYDQLTTVYAGDKHLIQIKVKRPSRISWTYMTDEDDIGFEIHYDKTGSCDKLTEMETVYPYIRLECTNVPITGHLDVTDVGNYVLEFDNYYSWFSAKQLRYNIEIEDL</sequence>
<dbReference type="EMBL" id="BX284601">
    <property type="protein sequence ID" value="CAB07482.1"/>
    <property type="molecule type" value="Genomic_DNA"/>
</dbReference>
<dbReference type="EMBL" id="BX284601">
    <property type="protein sequence ID" value="CCO25611.1"/>
    <property type="molecule type" value="Genomic_DNA"/>
</dbReference>
<dbReference type="EMBL" id="BX284601">
    <property type="protein sequence ID" value="CCO25612.1"/>
    <property type="molecule type" value="Genomic_DNA"/>
</dbReference>
<dbReference type="PIR" id="T23057">
    <property type="entry name" value="T23057"/>
</dbReference>
<dbReference type="RefSeq" id="NP_001263451.1">
    <molecule id="O17907-2"/>
    <property type="nucleotide sequence ID" value="NM_001276522.3"/>
</dbReference>
<dbReference type="RefSeq" id="NP_001263452.1">
    <molecule id="O17907-3"/>
    <property type="nucleotide sequence ID" value="NM_001276523.3"/>
</dbReference>
<dbReference type="RefSeq" id="NP_491993.1">
    <molecule id="O17907-1"/>
    <property type="nucleotide sequence ID" value="NM_059592.6"/>
</dbReference>
<dbReference type="SMR" id="O17907"/>
<dbReference type="DIP" id="DIP-25940N"/>
<dbReference type="FunCoup" id="O17907">
    <property type="interactions" value="167"/>
</dbReference>
<dbReference type="STRING" id="6239.H06O01.3a.1"/>
<dbReference type="PaxDb" id="6239-H06O01.3a"/>
<dbReference type="PeptideAtlas" id="O17907"/>
<dbReference type="EnsemblMetazoa" id="H06O01.3a.1">
    <molecule id="O17907-1"/>
    <property type="protein sequence ID" value="H06O01.3a.1"/>
    <property type="gene ID" value="WBGene00010370"/>
</dbReference>
<dbReference type="EnsemblMetazoa" id="H06O01.3b.1">
    <molecule id="O17907-2"/>
    <property type="protein sequence ID" value="H06O01.3b.1"/>
    <property type="gene ID" value="WBGene00010370"/>
</dbReference>
<dbReference type="EnsemblMetazoa" id="H06O01.3c.1">
    <molecule id="O17907-3"/>
    <property type="protein sequence ID" value="H06O01.3c.1"/>
    <property type="gene ID" value="WBGene00010370"/>
</dbReference>
<dbReference type="GeneID" id="172431"/>
<dbReference type="KEGG" id="cel:CELE_H06O01.3"/>
<dbReference type="UCSC" id="H06O01.3">
    <molecule id="O17907-1"/>
    <property type="organism name" value="c. elegans"/>
</dbReference>
<dbReference type="AGR" id="WB:WBGene00010370"/>
<dbReference type="CTD" id="172431"/>
<dbReference type="WormBase" id="H06O01.3a">
    <molecule id="O17907-1"/>
    <property type="protein sequence ID" value="CE17969"/>
    <property type="gene ID" value="WBGene00010370"/>
    <property type="gene designation" value="ctg-1"/>
</dbReference>
<dbReference type="WormBase" id="H06O01.3b">
    <molecule id="O17907-2"/>
    <property type="protein sequence ID" value="CE48027"/>
    <property type="gene ID" value="WBGene00010370"/>
    <property type="gene designation" value="ctg-1"/>
</dbReference>
<dbReference type="WormBase" id="H06O01.3c">
    <molecule id="O17907-3"/>
    <property type="protein sequence ID" value="CE47872"/>
    <property type="gene ID" value="WBGene00010370"/>
    <property type="gene designation" value="ctg-1"/>
</dbReference>
<dbReference type="eggNOG" id="KOG1471">
    <property type="taxonomic scope" value="Eukaryota"/>
</dbReference>
<dbReference type="GeneTree" id="ENSGT00940000170522"/>
<dbReference type="HOGENOM" id="CLU_014001_2_1_1"/>
<dbReference type="InParanoid" id="O17907"/>
<dbReference type="OMA" id="HCYDKVG"/>
<dbReference type="OrthoDB" id="1434354at2759"/>
<dbReference type="PhylomeDB" id="O17907"/>
<dbReference type="PRO" id="PR:O17907"/>
<dbReference type="Proteomes" id="UP000001940">
    <property type="component" value="Chromosome I"/>
</dbReference>
<dbReference type="Bgee" id="WBGene00010370">
    <property type="expression patterns" value="Expressed in larva and 4 other cell types or tissues"/>
</dbReference>
<dbReference type="GO" id="GO:0005737">
    <property type="term" value="C:cytoplasm"/>
    <property type="evidence" value="ECO:0000318"/>
    <property type="project" value="GO_Central"/>
</dbReference>
<dbReference type="GO" id="GO:0005829">
    <property type="term" value="C:cytosol"/>
    <property type="evidence" value="ECO:0007669"/>
    <property type="project" value="UniProtKB-SubCell"/>
</dbReference>
<dbReference type="GO" id="GO:0110011">
    <property type="term" value="P:regulation of basement membrane organization"/>
    <property type="evidence" value="ECO:0000315"/>
    <property type="project" value="UniProtKB"/>
</dbReference>
<dbReference type="CDD" id="cd00170">
    <property type="entry name" value="SEC14"/>
    <property type="match status" value="1"/>
</dbReference>
<dbReference type="Gene3D" id="3.40.525.10">
    <property type="entry name" value="CRAL-TRIO lipid binding domain"/>
    <property type="match status" value="1"/>
</dbReference>
<dbReference type="Gene3D" id="2.60.120.680">
    <property type="entry name" value="GOLD domain"/>
    <property type="match status" value="1"/>
</dbReference>
<dbReference type="InterPro" id="IPR001251">
    <property type="entry name" value="CRAL-TRIO_dom"/>
</dbReference>
<dbReference type="InterPro" id="IPR036865">
    <property type="entry name" value="CRAL-TRIO_dom_sf"/>
</dbReference>
<dbReference type="InterPro" id="IPR036273">
    <property type="entry name" value="CRAL/TRIO_N_dom_sf"/>
</dbReference>
<dbReference type="InterPro" id="IPR009038">
    <property type="entry name" value="GOLD_dom"/>
</dbReference>
<dbReference type="InterPro" id="IPR036598">
    <property type="entry name" value="GOLD_dom_sf"/>
</dbReference>
<dbReference type="InterPro" id="IPR051064">
    <property type="entry name" value="SEC14/CRAL-TRIO_domain"/>
</dbReference>
<dbReference type="PANTHER" id="PTHR23324">
    <property type="entry name" value="SEC14 RELATED PROTEIN"/>
    <property type="match status" value="1"/>
</dbReference>
<dbReference type="PANTHER" id="PTHR23324:SF83">
    <property type="entry name" value="SEC14-LIKE PROTEIN 2"/>
    <property type="match status" value="1"/>
</dbReference>
<dbReference type="Pfam" id="PF00650">
    <property type="entry name" value="CRAL_TRIO"/>
    <property type="match status" value="1"/>
</dbReference>
<dbReference type="SMART" id="SM00516">
    <property type="entry name" value="SEC14"/>
    <property type="match status" value="1"/>
</dbReference>
<dbReference type="SUPFAM" id="SSF52087">
    <property type="entry name" value="CRAL/TRIO domain"/>
    <property type="match status" value="1"/>
</dbReference>
<dbReference type="SUPFAM" id="SSF46938">
    <property type="entry name" value="CRAL/TRIO N-terminal domain"/>
    <property type="match status" value="1"/>
</dbReference>
<dbReference type="SUPFAM" id="SSF101576">
    <property type="entry name" value="Supernatant protein factor (SPF), C-terminal domain"/>
    <property type="match status" value="1"/>
</dbReference>
<dbReference type="PROSITE" id="PS50191">
    <property type="entry name" value="CRAL_TRIO"/>
    <property type="match status" value="1"/>
</dbReference>
<dbReference type="PROSITE" id="PS50866">
    <property type="entry name" value="GOLD"/>
    <property type="match status" value="1"/>
</dbReference>
<protein>
    <recommendedName>
        <fullName evidence="4">Protein ctg-1</fullName>
    </recommendedName>
</protein>
<keyword id="KW-0025">Alternative splicing</keyword>
<keyword id="KW-0963">Cytoplasm</keyword>
<keyword id="KW-1185">Reference proteome</keyword>
<evidence type="ECO:0000255" key="1">
    <source>
        <dbReference type="PROSITE-ProRule" id="PRU00056"/>
    </source>
</evidence>
<evidence type="ECO:0000255" key="2">
    <source>
        <dbReference type="PROSITE-ProRule" id="PRU00096"/>
    </source>
</evidence>
<evidence type="ECO:0000269" key="3">
    <source>
    </source>
</evidence>
<evidence type="ECO:0000305" key="4"/>
<evidence type="ECO:0000312" key="5">
    <source>
        <dbReference type="Proteomes" id="UP000001940"/>
    </source>
</evidence>
<evidence type="ECO:0000312" key="6">
    <source>
        <dbReference type="WormBase" id="H06O01.3a"/>
    </source>
</evidence>
<evidence type="ECO:0000312" key="7">
    <source>
        <dbReference type="WormBase" id="H06O01.3b"/>
    </source>
</evidence>
<evidence type="ECO:0000312" key="8">
    <source>
        <dbReference type="WormBase" id="H06O01.3c"/>
    </source>
</evidence>